<evidence type="ECO:0000255" key="1">
    <source>
        <dbReference type="HAMAP-Rule" id="MF_01615"/>
    </source>
</evidence>
<comment type="function">
    <text evidence="1">Catalyzes the hydrolysis of glutamine to glutamate and ammonia as part of the biosynthesis of pyridoxal 5'-phosphate. The resulting ammonia molecule is channeled to the active site of PdxS.</text>
</comment>
<comment type="catalytic activity">
    <reaction evidence="1">
        <text>aldehydo-D-ribose 5-phosphate + D-glyceraldehyde 3-phosphate + L-glutamine = pyridoxal 5'-phosphate + L-glutamate + phosphate + 3 H2O + H(+)</text>
        <dbReference type="Rhea" id="RHEA:31507"/>
        <dbReference type="ChEBI" id="CHEBI:15377"/>
        <dbReference type="ChEBI" id="CHEBI:15378"/>
        <dbReference type="ChEBI" id="CHEBI:29985"/>
        <dbReference type="ChEBI" id="CHEBI:43474"/>
        <dbReference type="ChEBI" id="CHEBI:58273"/>
        <dbReference type="ChEBI" id="CHEBI:58359"/>
        <dbReference type="ChEBI" id="CHEBI:59776"/>
        <dbReference type="ChEBI" id="CHEBI:597326"/>
        <dbReference type="EC" id="4.3.3.6"/>
    </reaction>
</comment>
<comment type="catalytic activity">
    <reaction evidence="1">
        <text>L-glutamine + H2O = L-glutamate + NH4(+)</text>
        <dbReference type="Rhea" id="RHEA:15889"/>
        <dbReference type="ChEBI" id="CHEBI:15377"/>
        <dbReference type="ChEBI" id="CHEBI:28938"/>
        <dbReference type="ChEBI" id="CHEBI:29985"/>
        <dbReference type="ChEBI" id="CHEBI:58359"/>
        <dbReference type="EC" id="3.5.1.2"/>
    </reaction>
</comment>
<comment type="pathway">
    <text evidence="1">Cofactor biosynthesis; pyridoxal 5'-phosphate biosynthesis.</text>
</comment>
<comment type="subunit">
    <text evidence="1">In the presence of PdxS, forms a dodecamer of heterodimers. Only shows activity in the heterodimer.</text>
</comment>
<comment type="similarity">
    <text evidence="1">Belongs to the glutaminase PdxT/SNO family.</text>
</comment>
<gene>
    <name evidence="1" type="primary">pdxT</name>
    <name type="ordered locus">Acel_1347</name>
</gene>
<protein>
    <recommendedName>
        <fullName evidence="1">Pyridoxal 5'-phosphate synthase subunit PdxT</fullName>
        <ecNumber evidence="1">4.3.3.6</ecNumber>
    </recommendedName>
    <alternativeName>
        <fullName evidence="1">Pdx2</fullName>
    </alternativeName>
    <alternativeName>
        <fullName evidence="1">Pyridoxal 5'-phosphate synthase glutaminase subunit</fullName>
        <ecNumber evidence="1">3.5.1.2</ecNumber>
    </alternativeName>
</protein>
<dbReference type="EC" id="4.3.3.6" evidence="1"/>
<dbReference type="EC" id="3.5.1.2" evidence="1"/>
<dbReference type="EMBL" id="CP000481">
    <property type="protein sequence ID" value="ABK53119.1"/>
    <property type="molecule type" value="Genomic_DNA"/>
</dbReference>
<dbReference type="RefSeq" id="WP_011720182.1">
    <property type="nucleotide sequence ID" value="NC_008578.1"/>
</dbReference>
<dbReference type="SMR" id="A0LUK9"/>
<dbReference type="FunCoup" id="A0LUK9">
    <property type="interactions" value="132"/>
</dbReference>
<dbReference type="STRING" id="351607.Acel_1347"/>
<dbReference type="KEGG" id="ace:Acel_1347"/>
<dbReference type="eggNOG" id="COG0311">
    <property type="taxonomic scope" value="Bacteria"/>
</dbReference>
<dbReference type="HOGENOM" id="CLU_069674_2_0_11"/>
<dbReference type="InParanoid" id="A0LUK9"/>
<dbReference type="OrthoDB" id="9810320at2"/>
<dbReference type="UniPathway" id="UPA00245"/>
<dbReference type="Proteomes" id="UP000008221">
    <property type="component" value="Chromosome"/>
</dbReference>
<dbReference type="GO" id="GO:0005829">
    <property type="term" value="C:cytosol"/>
    <property type="evidence" value="ECO:0007669"/>
    <property type="project" value="TreeGrafter"/>
</dbReference>
<dbReference type="GO" id="GO:1903600">
    <property type="term" value="C:glutaminase complex"/>
    <property type="evidence" value="ECO:0007669"/>
    <property type="project" value="TreeGrafter"/>
</dbReference>
<dbReference type="GO" id="GO:0004359">
    <property type="term" value="F:glutaminase activity"/>
    <property type="evidence" value="ECO:0007669"/>
    <property type="project" value="UniProtKB-UniRule"/>
</dbReference>
<dbReference type="GO" id="GO:0036381">
    <property type="term" value="F:pyridoxal 5'-phosphate synthase (glutamine hydrolysing) activity"/>
    <property type="evidence" value="ECO:0007669"/>
    <property type="project" value="UniProtKB-UniRule"/>
</dbReference>
<dbReference type="GO" id="GO:0006543">
    <property type="term" value="P:glutamine catabolic process"/>
    <property type="evidence" value="ECO:0007669"/>
    <property type="project" value="UniProtKB-UniRule"/>
</dbReference>
<dbReference type="GO" id="GO:0042823">
    <property type="term" value="P:pyridoxal phosphate biosynthetic process"/>
    <property type="evidence" value="ECO:0007669"/>
    <property type="project" value="UniProtKB-UniRule"/>
</dbReference>
<dbReference type="GO" id="GO:0008614">
    <property type="term" value="P:pyridoxine metabolic process"/>
    <property type="evidence" value="ECO:0007669"/>
    <property type="project" value="TreeGrafter"/>
</dbReference>
<dbReference type="CDD" id="cd01749">
    <property type="entry name" value="GATase1_PB"/>
    <property type="match status" value="1"/>
</dbReference>
<dbReference type="FunFam" id="3.40.50.880:FF:000010">
    <property type="entry name" value="uncharacterized protein LOC100176842 isoform X2"/>
    <property type="match status" value="1"/>
</dbReference>
<dbReference type="Gene3D" id="3.40.50.880">
    <property type="match status" value="1"/>
</dbReference>
<dbReference type="HAMAP" id="MF_01615">
    <property type="entry name" value="PdxT"/>
    <property type="match status" value="1"/>
</dbReference>
<dbReference type="InterPro" id="IPR029062">
    <property type="entry name" value="Class_I_gatase-like"/>
</dbReference>
<dbReference type="InterPro" id="IPR002161">
    <property type="entry name" value="PdxT/SNO"/>
</dbReference>
<dbReference type="InterPro" id="IPR021196">
    <property type="entry name" value="PdxT/SNO_CS"/>
</dbReference>
<dbReference type="NCBIfam" id="TIGR03800">
    <property type="entry name" value="PLP_synth_Pdx2"/>
    <property type="match status" value="1"/>
</dbReference>
<dbReference type="PANTHER" id="PTHR31559">
    <property type="entry name" value="PYRIDOXAL 5'-PHOSPHATE SYNTHASE SUBUNIT SNO"/>
    <property type="match status" value="1"/>
</dbReference>
<dbReference type="PANTHER" id="PTHR31559:SF0">
    <property type="entry name" value="PYRIDOXAL 5'-PHOSPHATE SYNTHASE SUBUNIT SNO1-RELATED"/>
    <property type="match status" value="1"/>
</dbReference>
<dbReference type="Pfam" id="PF01174">
    <property type="entry name" value="SNO"/>
    <property type="match status" value="1"/>
</dbReference>
<dbReference type="PIRSF" id="PIRSF005639">
    <property type="entry name" value="Glut_amidoT_SNO"/>
    <property type="match status" value="1"/>
</dbReference>
<dbReference type="SUPFAM" id="SSF52317">
    <property type="entry name" value="Class I glutamine amidotransferase-like"/>
    <property type="match status" value="1"/>
</dbReference>
<dbReference type="PROSITE" id="PS01236">
    <property type="entry name" value="PDXT_SNO_1"/>
    <property type="match status" value="1"/>
</dbReference>
<dbReference type="PROSITE" id="PS51130">
    <property type="entry name" value="PDXT_SNO_2"/>
    <property type="match status" value="1"/>
</dbReference>
<proteinExistence type="inferred from homology"/>
<keyword id="KW-0315">Glutamine amidotransferase</keyword>
<keyword id="KW-0378">Hydrolase</keyword>
<keyword id="KW-0456">Lyase</keyword>
<keyword id="KW-0663">Pyridoxal phosphate</keyword>
<keyword id="KW-1185">Reference proteome</keyword>
<organism>
    <name type="scientific">Acidothermus cellulolyticus (strain ATCC 43068 / DSM 8971 / 11B)</name>
    <dbReference type="NCBI Taxonomy" id="351607"/>
    <lineage>
        <taxon>Bacteria</taxon>
        <taxon>Bacillati</taxon>
        <taxon>Actinomycetota</taxon>
        <taxon>Actinomycetes</taxon>
        <taxon>Acidothermales</taxon>
        <taxon>Acidothermaceae</taxon>
        <taxon>Acidothermus</taxon>
    </lineage>
</organism>
<accession>A0LUK9</accession>
<feature type="chain" id="PRO_0000292989" description="Pyridoxal 5'-phosphate synthase subunit PdxT">
    <location>
        <begin position="1"/>
        <end position="207"/>
    </location>
</feature>
<feature type="active site" description="Nucleophile" evidence="1">
    <location>
        <position position="85"/>
    </location>
</feature>
<feature type="active site" description="Charge relay system" evidence="1">
    <location>
        <position position="184"/>
    </location>
</feature>
<feature type="active site" description="Charge relay system" evidence="1">
    <location>
        <position position="186"/>
    </location>
</feature>
<feature type="binding site" evidence="1">
    <location>
        <begin position="53"/>
        <end position="55"/>
    </location>
    <ligand>
        <name>L-glutamine</name>
        <dbReference type="ChEBI" id="CHEBI:58359"/>
    </ligand>
</feature>
<feature type="binding site" evidence="1">
    <location>
        <position position="114"/>
    </location>
    <ligand>
        <name>L-glutamine</name>
        <dbReference type="ChEBI" id="CHEBI:58359"/>
    </ligand>
</feature>
<feature type="binding site" evidence="1">
    <location>
        <begin position="143"/>
        <end position="144"/>
    </location>
    <ligand>
        <name>L-glutamine</name>
        <dbReference type="ChEBI" id="CHEBI:58359"/>
    </ligand>
</feature>
<name>PDXT_ACIC1</name>
<reference key="1">
    <citation type="journal article" date="2009" name="Genome Res.">
        <title>Complete genome of the cellulolytic thermophile Acidothermus cellulolyticus 11B provides insights into its ecophysiological and evolutionary adaptations.</title>
        <authorList>
            <person name="Barabote R.D."/>
            <person name="Xie G."/>
            <person name="Leu D.H."/>
            <person name="Normand P."/>
            <person name="Necsulea A."/>
            <person name="Daubin V."/>
            <person name="Medigue C."/>
            <person name="Adney W.S."/>
            <person name="Xu X.C."/>
            <person name="Lapidus A."/>
            <person name="Parales R.E."/>
            <person name="Detter C."/>
            <person name="Pujic P."/>
            <person name="Bruce D."/>
            <person name="Lavire C."/>
            <person name="Challacombe J.F."/>
            <person name="Brettin T.S."/>
            <person name="Berry A.M."/>
        </authorList>
    </citation>
    <scope>NUCLEOTIDE SEQUENCE [LARGE SCALE GENOMIC DNA]</scope>
    <source>
        <strain>ATCC 43068 / DSM 8971 / 11B</strain>
    </source>
</reference>
<sequence length="207" mass="21801">MTIPSNRPRVGVLALQGDVREHLAALGDAGADAVPVRRADELATVDALVIPGGESTTMDKLARAFGLWEPLRARLAAGMPAFGSCAGMIMLAARVVDAAPGQETLGVLDITVRRNAFGRQVDSFEADIPLTGLDGGPLRAVFIRAPWVEETGPDVEVLGRVPSGRHAGRIVAVRQGAVLATAFHPELTADRRLHAFFVAMVAAQARV</sequence>